<name>DEOC_VIBCM</name>
<accession>C3LQC2</accession>
<protein>
    <recommendedName>
        <fullName evidence="1">Deoxyribose-phosphate aldolase</fullName>
        <shortName evidence="1">DERA</shortName>
        <ecNumber evidence="1">4.1.2.4</ecNumber>
    </recommendedName>
    <alternativeName>
        <fullName evidence="1">2-deoxy-D-ribose 5-phosphate aldolase</fullName>
    </alternativeName>
    <alternativeName>
        <fullName evidence="1">Phosphodeoxyriboaldolase</fullName>
        <shortName evidence="1">Deoxyriboaldolase</shortName>
    </alternativeName>
</protein>
<reference key="1">
    <citation type="journal article" date="2008" name="PLoS ONE">
        <title>A recalibrated molecular clock and independent origins for the cholera pandemic clones.</title>
        <authorList>
            <person name="Feng L."/>
            <person name="Reeves P.R."/>
            <person name="Lan R."/>
            <person name="Ren Y."/>
            <person name="Gao C."/>
            <person name="Zhou Z."/>
            <person name="Ren Y."/>
            <person name="Cheng J."/>
            <person name="Wang W."/>
            <person name="Wang J."/>
            <person name="Qian W."/>
            <person name="Li D."/>
            <person name="Wang L."/>
        </authorList>
    </citation>
    <scope>NUCLEOTIDE SEQUENCE [LARGE SCALE GENOMIC DNA]</scope>
    <source>
        <strain>M66-2</strain>
    </source>
</reference>
<dbReference type="EC" id="4.1.2.4" evidence="1"/>
<dbReference type="EMBL" id="CP001233">
    <property type="protein sequence ID" value="ACP06574.1"/>
    <property type="molecule type" value="Genomic_DNA"/>
</dbReference>
<dbReference type="RefSeq" id="WP_001292544.1">
    <property type="nucleotide sequence ID" value="NC_012578.1"/>
</dbReference>
<dbReference type="SMR" id="C3LQC2"/>
<dbReference type="GeneID" id="94012993"/>
<dbReference type="KEGG" id="vcm:VCM66_2273"/>
<dbReference type="HOGENOM" id="CLU_053595_3_1_6"/>
<dbReference type="UniPathway" id="UPA00002">
    <property type="reaction ID" value="UER00468"/>
</dbReference>
<dbReference type="Proteomes" id="UP000001217">
    <property type="component" value="Chromosome I"/>
</dbReference>
<dbReference type="GO" id="GO:0005737">
    <property type="term" value="C:cytoplasm"/>
    <property type="evidence" value="ECO:0007669"/>
    <property type="project" value="UniProtKB-SubCell"/>
</dbReference>
<dbReference type="GO" id="GO:0004139">
    <property type="term" value="F:deoxyribose-phosphate aldolase activity"/>
    <property type="evidence" value="ECO:0007669"/>
    <property type="project" value="UniProtKB-UniRule"/>
</dbReference>
<dbReference type="GO" id="GO:0006018">
    <property type="term" value="P:2-deoxyribose 1-phosphate catabolic process"/>
    <property type="evidence" value="ECO:0007669"/>
    <property type="project" value="UniProtKB-UniRule"/>
</dbReference>
<dbReference type="GO" id="GO:0016052">
    <property type="term" value="P:carbohydrate catabolic process"/>
    <property type="evidence" value="ECO:0007669"/>
    <property type="project" value="TreeGrafter"/>
</dbReference>
<dbReference type="GO" id="GO:0009264">
    <property type="term" value="P:deoxyribonucleotide catabolic process"/>
    <property type="evidence" value="ECO:0007669"/>
    <property type="project" value="InterPro"/>
</dbReference>
<dbReference type="CDD" id="cd00959">
    <property type="entry name" value="DeoC"/>
    <property type="match status" value="1"/>
</dbReference>
<dbReference type="FunFam" id="3.20.20.70:FF:000034">
    <property type="entry name" value="Deoxyribose-phosphate aldolase"/>
    <property type="match status" value="1"/>
</dbReference>
<dbReference type="Gene3D" id="3.20.20.70">
    <property type="entry name" value="Aldolase class I"/>
    <property type="match status" value="1"/>
</dbReference>
<dbReference type="HAMAP" id="MF_00592">
    <property type="entry name" value="DeoC_type2"/>
    <property type="match status" value="1"/>
</dbReference>
<dbReference type="InterPro" id="IPR013785">
    <property type="entry name" value="Aldolase_TIM"/>
</dbReference>
<dbReference type="InterPro" id="IPR011343">
    <property type="entry name" value="DeoC"/>
</dbReference>
<dbReference type="InterPro" id="IPR002915">
    <property type="entry name" value="DeoC/FbaB/LacD_aldolase"/>
</dbReference>
<dbReference type="InterPro" id="IPR023649">
    <property type="entry name" value="DeoC_typeII"/>
</dbReference>
<dbReference type="NCBIfam" id="TIGR00126">
    <property type="entry name" value="deoC"/>
    <property type="match status" value="1"/>
</dbReference>
<dbReference type="PANTHER" id="PTHR10889">
    <property type="entry name" value="DEOXYRIBOSE-PHOSPHATE ALDOLASE"/>
    <property type="match status" value="1"/>
</dbReference>
<dbReference type="PANTHER" id="PTHR10889:SF3">
    <property type="entry name" value="DEOXYRIBOSE-PHOSPHATE ALDOLASE"/>
    <property type="match status" value="1"/>
</dbReference>
<dbReference type="Pfam" id="PF01791">
    <property type="entry name" value="DeoC"/>
    <property type="match status" value="1"/>
</dbReference>
<dbReference type="PIRSF" id="PIRSF001357">
    <property type="entry name" value="DeoC"/>
    <property type="match status" value="1"/>
</dbReference>
<dbReference type="SMART" id="SM01133">
    <property type="entry name" value="DeoC"/>
    <property type="match status" value="1"/>
</dbReference>
<dbReference type="SUPFAM" id="SSF51569">
    <property type="entry name" value="Aldolase"/>
    <property type="match status" value="1"/>
</dbReference>
<feature type="chain" id="PRO_1000146966" description="Deoxyribose-phosphate aldolase">
    <location>
        <begin position="1"/>
        <end position="259"/>
    </location>
</feature>
<feature type="active site" description="Proton donor/acceptor" evidence="1">
    <location>
        <position position="102"/>
    </location>
</feature>
<feature type="active site" description="Schiff-base intermediate with acetaldehyde" evidence="1">
    <location>
        <position position="166"/>
    </location>
</feature>
<feature type="active site" description="Proton donor/acceptor" evidence="1">
    <location>
        <position position="200"/>
    </location>
</feature>
<proteinExistence type="inferred from homology"/>
<gene>
    <name evidence="1" type="primary">deoC</name>
    <name type="ordered locus">VCM66_2273</name>
</gene>
<organism>
    <name type="scientific">Vibrio cholerae serotype O1 (strain M66-2)</name>
    <dbReference type="NCBI Taxonomy" id="579112"/>
    <lineage>
        <taxon>Bacteria</taxon>
        <taxon>Pseudomonadati</taxon>
        <taxon>Pseudomonadota</taxon>
        <taxon>Gammaproteobacteria</taxon>
        <taxon>Vibrionales</taxon>
        <taxon>Vibrionaceae</taxon>
        <taxon>Vibrio</taxon>
    </lineage>
</organism>
<keyword id="KW-0963">Cytoplasm</keyword>
<keyword id="KW-0456">Lyase</keyword>
<keyword id="KW-0704">Schiff base</keyword>
<evidence type="ECO:0000255" key="1">
    <source>
        <dbReference type="HAMAP-Rule" id="MF_00592"/>
    </source>
</evidence>
<comment type="function">
    <text evidence="1">Catalyzes a reversible aldol reaction between acetaldehyde and D-glyceraldehyde 3-phosphate to generate 2-deoxy-D-ribose 5-phosphate.</text>
</comment>
<comment type="catalytic activity">
    <reaction evidence="1">
        <text>2-deoxy-D-ribose 5-phosphate = D-glyceraldehyde 3-phosphate + acetaldehyde</text>
        <dbReference type="Rhea" id="RHEA:12821"/>
        <dbReference type="ChEBI" id="CHEBI:15343"/>
        <dbReference type="ChEBI" id="CHEBI:59776"/>
        <dbReference type="ChEBI" id="CHEBI:62877"/>
        <dbReference type="EC" id="4.1.2.4"/>
    </reaction>
</comment>
<comment type="pathway">
    <text evidence="1">Carbohydrate degradation; 2-deoxy-D-ribose 1-phosphate degradation; D-glyceraldehyde 3-phosphate and acetaldehyde from 2-deoxy-alpha-D-ribose 1-phosphate: step 2/2.</text>
</comment>
<comment type="subcellular location">
    <subcellularLocation>
        <location evidence="1">Cytoplasm</location>
    </subcellularLocation>
</comment>
<comment type="similarity">
    <text evidence="1">Belongs to the DeoC/FbaB aldolase family. DeoC type 2 subfamily.</text>
</comment>
<sequence length="259" mass="27959">MSELKVAALRALKLMDLTTLNDNDTDAKVIQLCHDAKSPVGNTAAICIYPRFIPIAKKTLREQGTPEIRIATVTNFPHGNDDIEIAVAETKAAVAYGADEVDVVFPYRALIAGNEQVGFDLVKQCKAACGDKVLLKVIIETGELKQEALIKKASQICIEAGADFIKTSTGKVPVNATPEYARMMLEVIRDMGVAKTVGFKPAGGVRTAEDAQQYLAMADEILGGDWADSRHYRFGASSLLTNLLNTLEVTDQKADPAAY</sequence>